<comment type="function">
    <text evidence="1">Involved in the gluconeogenesis. Catalyzes stereospecifically the conversion of dihydroxyacetone phosphate (DHAP) to D-glyceraldehyde-3-phosphate (G3P).</text>
</comment>
<comment type="catalytic activity">
    <reaction evidence="1">
        <text>D-glyceraldehyde 3-phosphate = dihydroxyacetone phosphate</text>
        <dbReference type="Rhea" id="RHEA:18585"/>
        <dbReference type="ChEBI" id="CHEBI:57642"/>
        <dbReference type="ChEBI" id="CHEBI:59776"/>
        <dbReference type="EC" id="5.3.1.1"/>
    </reaction>
</comment>
<comment type="pathway">
    <text evidence="1">Carbohydrate biosynthesis; gluconeogenesis.</text>
</comment>
<comment type="pathway">
    <text evidence="1">Carbohydrate degradation; glycolysis; D-glyceraldehyde 3-phosphate from glycerone phosphate: step 1/1.</text>
</comment>
<comment type="subunit">
    <text evidence="1">Homodimer.</text>
</comment>
<comment type="subcellular location">
    <subcellularLocation>
        <location evidence="1">Cytoplasm</location>
    </subcellularLocation>
</comment>
<comment type="similarity">
    <text evidence="1">Belongs to the triosephosphate isomerase family.</text>
</comment>
<keyword id="KW-0963">Cytoplasm</keyword>
<keyword id="KW-0312">Gluconeogenesis</keyword>
<keyword id="KW-0324">Glycolysis</keyword>
<keyword id="KW-0413">Isomerase</keyword>
<sequence>MRHPLVMGNWKLNGSRHMVHELVSNLRKELAGVAGCAVAIAPPEMYIDMAKREAEGSHIMLGAQNVDLNLSGAFTGETSAAMLKDIGAQYIIIGHSERRTYHKESDELIAKKFAVLKEQGLTPVLCIGETEAENEAGKTEEVCARQIDAVLKTQGAAAFEGAVIAYEPVWAIGTGKSATPAQAQAVHKFIRDHIAKVDANIAEQVIIQYGGSVNASNAAELFAQPDIDGALVGGASLKADAFAVIVKAAEAAKQA</sequence>
<proteinExistence type="inferred from homology"/>
<name>TPIS_ECO7I</name>
<dbReference type="EC" id="5.3.1.1" evidence="1"/>
<dbReference type="EMBL" id="CU928164">
    <property type="protein sequence ID" value="CAR19196.1"/>
    <property type="molecule type" value="Genomic_DNA"/>
</dbReference>
<dbReference type="RefSeq" id="WP_001216325.1">
    <property type="nucleotide sequence ID" value="NC_011750.1"/>
</dbReference>
<dbReference type="RefSeq" id="YP_002409007.1">
    <property type="nucleotide sequence ID" value="NC_011750.1"/>
</dbReference>
<dbReference type="SMR" id="B7NU88"/>
<dbReference type="STRING" id="585057.ECIAI39_3077"/>
<dbReference type="GeneID" id="93777979"/>
<dbReference type="KEGG" id="ect:ECIAI39_3077"/>
<dbReference type="PATRIC" id="fig|585057.6.peg.3189"/>
<dbReference type="HOGENOM" id="CLU_024251_2_1_6"/>
<dbReference type="UniPathway" id="UPA00109">
    <property type="reaction ID" value="UER00189"/>
</dbReference>
<dbReference type="UniPathway" id="UPA00138"/>
<dbReference type="Proteomes" id="UP000000749">
    <property type="component" value="Chromosome"/>
</dbReference>
<dbReference type="GO" id="GO:0005829">
    <property type="term" value="C:cytosol"/>
    <property type="evidence" value="ECO:0007669"/>
    <property type="project" value="TreeGrafter"/>
</dbReference>
<dbReference type="GO" id="GO:0004807">
    <property type="term" value="F:triose-phosphate isomerase activity"/>
    <property type="evidence" value="ECO:0007669"/>
    <property type="project" value="UniProtKB-UniRule"/>
</dbReference>
<dbReference type="GO" id="GO:0006094">
    <property type="term" value="P:gluconeogenesis"/>
    <property type="evidence" value="ECO:0007669"/>
    <property type="project" value="UniProtKB-UniRule"/>
</dbReference>
<dbReference type="GO" id="GO:0046166">
    <property type="term" value="P:glyceraldehyde-3-phosphate biosynthetic process"/>
    <property type="evidence" value="ECO:0007669"/>
    <property type="project" value="TreeGrafter"/>
</dbReference>
<dbReference type="GO" id="GO:0019563">
    <property type="term" value="P:glycerol catabolic process"/>
    <property type="evidence" value="ECO:0007669"/>
    <property type="project" value="TreeGrafter"/>
</dbReference>
<dbReference type="GO" id="GO:0006096">
    <property type="term" value="P:glycolytic process"/>
    <property type="evidence" value="ECO:0007669"/>
    <property type="project" value="UniProtKB-UniRule"/>
</dbReference>
<dbReference type="CDD" id="cd00311">
    <property type="entry name" value="TIM"/>
    <property type="match status" value="1"/>
</dbReference>
<dbReference type="FunFam" id="3.20.20.70:FF:000020">
    <property type="entry name" value="Triosephosphate isomerase"/>
    <property type="match status" value="1"/>
</dbReference>
<dbReference type="Gene3D" id="3.20.20.70">
    <property type="entry name" value="Aldolase class I"/>
    <property type="match status" value="1"/>
</dbReference>
<dbReference type="HAMAP" id="MF_00147_B">
    <property type="entry name" value="TIM_B"/>
    <property type="match status" value="1"/>
</dbReference>
<dbReference type="InterPro" id="IPR013785">
    <property type="entry name" value="Aldolase_TIM"/>
</dbReference>
<dbReference type="InterPro" id="IPR035990">
    <property type="entry name" value="TIM_sf"/>
</dbReference>
<dbReference type="InterPro" id="IPR022896">
    <property type="entry name" value="TrioseP_Isoase_bac/euk"/>
</dbReference>
<dbReference type="InterPro" id="IPR000652">
    <property type="entry name" value="Triosephosphate_isomerase"/>
</dbReference>
<dbReference type="InterPro" id="IPR020861">
    <property type="entry name" value="Triosephosphate_isomerase_AS"/>
</dbReference>
<dbReference type="NCBIfam" id="TIGR00419">
    <property type="entry name" value="tim"/>
    <property type="match status" value="1"/>
</dbReference>
<dbReference type="PANTHER" id="PTHR21139">
    <property type="entry name" value="TRIOSEPHOSPHATE ISOMERASE"/>
    <property type="match status" value="1"/>
</dbReference>
<dbReference type="PANTHER" id="PTHR21139:SF42">
    <property type="entry name" value="TRIOSEPHOSPHATE ISOMERASE"/>
    <property type="match status" value="1"/>
</dbReference>
<dbReference type="Pfam" id="PF00121">
    <property type="entry name" value="TIM"/>
    <property type="match status" value="1"/>
</dbReference>
<dbReference type="SUPFAM" id="SSF51351">
    <property type="entry name" value="Triosephosphate isomerase (TIM)"/>
    <property type="match status" value="1"/>
</dbReference>
<dbReference type="PROSITE" id="PS00171">
    <property type="entry name" value="TIM_1"/>
    <property type="match status" value="1"/>
</dbReference>
<dbReference type="PROSITE" id="PS51440">
    <property type="entry name" value="TIM_2"/>
    <property type="match status" value="1"/>
</dbReference>
<reference key="1">
    <citation type="journal article" date="2009" name="PLoS Genet.">
        <title>Organised genome dynamics in the Escherichia coli species results in highly diverse adaptive paths.</title>
        <authorList>
            <person name="Touchon M."/>
            <person name="Hoede C."/>
            <person name="Tenaillon O."/>
            <person name="Barbe V."/>
            <person name="Baeriswyl S."/>
            <person name="Bidet P."/>
            <person name="Bingen E."/>
            <person name="Bonacorsi S."/>
            <person name="Bouchier C."/>
            <person name="Bouvet O."/>
            <person name="Calteau A."/>
            <person name="Chiapello H."/>
            <person name="Clermont O."/>
            <person name="Cruveiller S."/>
            <person name="Danchin A."/>
            <person name="Diard M."/>
            <person name="Dossat C."/>
            <person name="Karoui M.E."/>
            <person name="Frapy E."/>
            <person name="Garry L."/>
            <person name="Ghigo J.M."/>
            <person name="Gilles A.M."/>
            <person name="Johnson J."/>
            <person name="Le Bouguenec C."/>
            <person name="Lescat M."/>
            <person name="Mangenot S."/>
            <person name="Martinez-Jehanne V."/>
            <person name="Matic I."/>
            <person name="Nassif X."/>
            <person name="Oztas S."/>
            <person name="Petit M.A."/>
            <person name="Pichon C."/>
            <person name="Rouy Z."/>
            <person name="Ruf C.S."/>
            <person name="Schneider D."/>
            <person name="Tourret J."/>
            <person name="Vacherie B."/>
            <person name="Vallenet D."/>
            <person name="Medigue C."/>
            <person name="Rocha E.P.C."/>
            <person name="Denamur E."/>
        </authorList>
    </citation>
    <scope>NUCLEOTIDE SEQUENCE [LARGE SCALE GENOMIC DNA]</scope>
    <source>
        <strain>IAI39 / ExPEC</strain>
    </source>
</reference>
<evidence type="ECO:0000255" key="1">
    <source>
        <dbReference type="HAMAP-Rule" id="MF_00147"/>
    </source>
</evidence>
<organism>
    <name type="scientific">Escherichia coli O7:K1 (strain IAI39 / ExPEC)</name>
    <dbReference type="NCBI Taxonomy" id="585057"/>
    <lineage>
        <taxon>Bacteria</taxon>
        <taxon>Pseudomonadati</taxon>
        <taxon>Pseudomonadota</taxon>
        <taxon>Gammaproteobacteria</taxon>
        <taxon>Enterobacterales</taxon>
        <taxon>Enterobacteriaceae</taxon>
        <taxon>Escherichia</taxon>
    </lineage>
</organism>
<protein>
    <recommendedName>
        <fullName evidence="1">Triosephosphate isomerase</fullName>
        <shortName evidence="1">TIM</shortName>
        <shortName evidence="1">TPI</shortName>
        <ecNumber evidence="1">5.3.1.1</ecNumber>
    </recommendedName>
    <alternativeName>
        <fullName evidence="1">Triose-phosphate isomerase</fullName>
    </alternativeName>
</protein>
<gene>
    <name evidence="1" type="primary">tpiA</name>
    <name type="ordered locus">ECIAI39_3077</name>
</gene>
<accession>B7NU88</accession>
<feature type="chain" id="PRO_1000196983" description="Triosephosphate isomerase">
    <location>
        <begin position="1"/>
        <end position="255"/>
    </location>
</feature>
<feature type="active site" description="Electrophile" evidence="1">
    <location>
        <position position="95"/>
    </location>
</feature>
<feature type="active site" description="Proton acceptor" evidence="1">
    <location>
        <position position="167"/>
    </location>
</feature>
<feature type="binding site" evidence="1">
    <location>
        <begin position="9"/>
        <end position="11"/>
    </location>
    <ligand>
        <name>substrate</name>
    </ligand>
</feature>
<feature type="binding site" evidence="1">
    <location>
        <position position="173"/>
    </location>
    <ligand>
        <name>substrate</name>
    </ligand>
</feature>
<feature type="binding site" evidence="1">
    <location>
        <position position="212"/>
    </location>
    <ligand>
        <name>substrate</name>
    </ligand>
</feature>
<feature type="binding site" evidence="1">
    <location>
        <begin position="233"/>
        <end position="234"/>
    </location>
    <ligand>
        <name>substrate</name>
    </ligand>
</feature>